<feature type="chain" id="PRO_0000120267" description="Probable Brix domain-containing ribosomal biogenesis protein">
    <location>
        <begin position="1"/>
        <end position="153"/>
    </location>
</feature>
<feature type="domain" description="Brix" evidence="1">
    <location>
        <begin position="1"/>
        <end position="153"/>
    </location>
</feature>
<keyword id="KW-1185">Reference proteome</keyword>
<keyword id="KW-0690">Ribosome biogenesis</keyword>
<reference key="1">
    <citation type="journal article" date="1997" name="Nature">
        <title>The complete genome sequence of the hyperthermophilic, sulphate-reducing archaeon Archaeoglobus fulgidus.</title>
        <authorList>
            <person name="Klenk H.-P."/>
            <person name="Clayton R.A."/>
            <person name="Tomb J.-F."/>
            <person name="White O."/>
            <person name="Nelson K.E."/>
            <person name="Ketchum K.A."/>
            <person name="Dodson R.J."/>
            <person name="Gwinn M.L."/>
            <person name="Hickey E.K."/>
            <person name="Peterson J.D."/>
            <person name="Richardson D.L."/>
            <person name="Kerlavage A.R."/>
            <person name="Graham D.E."/>
            <person name="Kyrpides N.C."/>
            <person name="Fleischmann R.D."/>
            <person name="Quackenbush J."/>
            <person name="Lee N.H."/>
            <person name="Sutton G.G."/>
            <person name="Gill S.R."/>
            <person name="Kirkness E.F."/>
            <person name="Dougherty B.A."/>
            <person name="McKenney K."/>
            <person name="Adams M.D."/>
            <person name="Loftus B.J."/>
            <person name="Peterson S.N."/>
            <person name="Reich C.I."/>
            <person name="McNeil L.K."/>
            <person name="Badger J.H."/>
            <person name="Glodek A."/>
            <person name="Zhou L."/>
            <person name="Overbeek R."/>
            <person name="Gocayne J.D."/>
            <person name="Weidman J.F."/>
            <person name="McDonald L.A."/>
            <person name="Utterback T.R."/>
            <person name="Cotton M.D."/>
            <person name="Spriggs T."/>
            <person name="Artiach P."/>
            <person name="Kaine B.P."/>
            <person name="Sykes S.M."/>
            <person name="Sadow P.W."/>
            <person name="D'Andrea K.P."/>
            <person name="Bowman C."/>
            <person name="Fujii C."/>
            <person name="Garland S.A."/>
            <person name="Mason T.M."/>
            <person name="Olsen G.J."/>
            <person name="Fraser C.M."/>
            <person name="Smith H.O."/>
            <person name="Woese C.R."/>
            <person name="Venter J.C."/>
        </authorList>
    </citation>
    <scope>NUCLEOTIDE SEQUENCE [LARGE SCALE GENOMIC DNA]</scope>
    <source>
        <strain>ATCC 49558 / DSM 4304 / JCM 9628 / NBRC 100126 / VC-16</strain>
    </source>
</reference>
<dbReference type="EMBL" id="AE000782">
    <property type="protein sequence ID" value="AAB90132.1"/>
    <property type="molecule type" value="Genomic_DNA"/>
</dbReference>
<dbReference type="PIR" id="A69388">
    <property type="entry name" value="A69388"/>
</dbReference>
<dbReference type="RefSeq" id="WP_010878602.1">
    <property type="nucleotide sequence ID" value="NC_000917.1"/>
</dbReference>
<dbReference type="SMR" id="O29159"/>
<dbReference type="STRING" id="224325.AF_1106"/>
<dbReference type="PaxDb" id="224325-AF_1106"/>
<dbReference type="EnsemblBacteria" id="AAB90132">
    <property type="protein sequence ID" value="AAB90132"/>
    <property type="gene ID" value="AF_1106"/>
</dbReference>
<dbReference type="KEGG" id="afu:AF_1106"/>
<dbReference type="eggNOG" id="arCOG03247">
    <property type="taxonomic scope" value="Archaea"/>
</dbReference>
<dbReference type="HOGENOM" id="CLU_107897_2_0_2"/>
<dbReference type="OrthoDB" id="117530at2157"/>
<dbReference type="Proteomes" id="UP000002199">
    <property type="component" value="Chromosome"/>
</dbReference>
<dbReference type="GO" id="GO:0019843">
    <property type="term" value="F:rRNA binding"/>
    <property type="evidence" value="ECO:0007669"/>
    <property type="project" value="InterPro"/>
</dbReference>
<dbReference type="GO" id="GO:0006364">
    <property type="term" value="P:rRNA processing"/>
    <property type="evidence" value="ECO:0007669"/>
    <property type="project" value="InterPro"/>
</dbReference>
<dbReference type="Gene3D" id="3.40.50.10480">
    <property type="entry name" value="Probable brix-domain ribosomal biogenesis protein"/>
    <property type="match status" value="1"/>
</dbReference>
<dbReference type="HAMAP" id="MF_00699">
    <property type="entry name" value="BriX"/>
    <property type="match status" value="1"/>
</dbReference>
<dbReference type="InterPro" id="IPR007109">
    <property type="entry name" value="Brix"/>
</dbReference>
<dbReference type="InterPro" id="IPR023548">
    <property type="entry name" value="Brix_dom_Rbsml_bgen_prot"/>
</dbReference>
<dbReference type="NCBIfam" id="NF002093">
    <property type="entry name" value="PRK00933.1-3"/>
    <property type="match status" value="1"/>
</dbReference>
<dbReference type="SMART" id="SM00879">
    <property type="entry name" value="Brix"/>
    <property type="match status" value="1"/>
</dbReference>
<dbReference type="SUPFAM" id="SSF52954">
    <property type="entry name" value="Class II aaRS ABD-related"/>
    <property type="match status" value="1"/>
</dbReference>
<dbReference type="PROSITE" id="PS50833">
    <property type="entry name" value="BRIX"/>
    <property type="match status" value="1"/>
</dbReference>
<proteinExistence type="inferred from homology"/>
<protein>
    <recommendedName>
        <fullName evidence="1">Probable Brix domain-containing ribosomal biogenesis protein</fullName>
    </recommendedName>
</protein>
<organism>
    <name type="scientific">Archaeoglobus fulgidus (strain ATCC 49558 / DSM 4304 / JCM 9628 / NBRC 100126 / VC-16)</name>
    <dbReference type="NCBI Taxonomy" id="224325"/>
    <lineage>
        <taxon>Archaea</taxon>
        <taxon>Methanobacteriati</taxon>
        <taxon>Methanobacteriota</taxon>
        <taxon>Archaeoglobi</taxon>
        <taxon>Archaeoglobales</taxon>
        <taxon>Archaeoglobaceae</taxon>
        <taxon>Archaeoglobus</taxon>
    </lineage>
</organism>
<gene>
    <name type="ordered locus">AF_1106</name>
</gene>
<comment type="function">
    <text evidence="1">Probably involved in the biogenesis of the ribosome.</text>
</comment>
<evidence type="ECO:0000255" key="1">
    <source>
        <dbReference type="HAMAP-Rule" id="MF_00699"/>
    </source>
</evidence>
<sequence length="153" mass="17699">MQVLTTSRKPGRKTRRFAKVLARFFNWKYVNRGKLSLEDLAGIAERFWIISEVKGNPAILNLYERGEKTLEVSFTLSNVNKIKMDDSPAVFKGKAPIDPLVFGAIPQTKAGLKLTRKVEFRKKVVVKGDEWLFFYDDEMLFKLRILKISRSSR</sequence>
<accession>O29159</accession>
<name>BRIX_ARCFU</name>